<organism>
    <name type="scientific">Mus musculus</name>
    <name type="common">Mouse</name>
    <dbReference type="NCBI Taxonomy" id="10090"/>
    <lineage>
        <taxon>Eukaryota</taxon>
        <taxon>Metazoa</taxon>
        <taxon>Chordata</taxon>
        <taxon>Craniata</taxon>
        <taxon>Vertebrata</taxon>
        <taxon>Euteleostomi</taxon>
        <taxon>Mammalia</taxon>
        <taxon>Eutheria</taxon>
        <taxon>Euarchontoglires</taxon>
        <taxon>Glires</taxon>
        <taxon>Rodentia</taxon>
        <taxon>Myomorpha</taxon>
        <taxon>Muroidea</taxon>
        <taxon>Muridae</taxon>
        <taxon>Murinae</taxon>
        <taxon>Mus</taxon>
        <taxon>Mus</taxon>
    </lineage>
</organism>
<accession>Q99JB8</accession>
<accession>Q9EQP9</accession>
<sequence length="424" mass="48585">MAPEEDAGGEVLGGSFWEAGNYRRTVQRVEDGHRLCGDLVSCFQERARIEKAYAQQLADWARKWRGAVEKGPQYGTLEKAWHAFFTAAERLSELHLEVREKLHGPDSERVRTWQRGAFHRPVLGGFRESRAAEDGFRKAQKPWLKRLKEVEASKKSYHTARKDEKTAQTRESHAKADSSMSQEQLRKLQERVGRCTKEAEKMKTQYEQTLAELNRYTPRYMEDMEQAFESCQAAERQRLLFFKDVLLTLHQHLDLSSSDKFHELHRDLQQSIEAASDEEDLRWWRSTHGPGMAMNWPQFEEWSLDTQRAISRKEKGGRSPDEVTLTSIVPTRDGTAPPPQSPSSPGSGQDEDWSDEESPRKVATGVRVRALYDYAGQEADELSFRAGEELLKMSEEDEQGWCQGQLQSGRIGLYPANYVECVGA</sequence>
<feature type="chain" id="PRO_0000161801" description="Protein kinase C and casein kinase II substrate protein 3">
    <location>
        <begin position="1"/>
        <end position="424"/>
    </location>
</feature>
<feature type="domain" description="F-BAR" evidence="3">
    <location>
        <begin position="10"/>
        <end position="280"/>
    </location>
</feature>
<feature type="domain" description="SH3" evidence="2">
    <location>
        <begin position="363"/>
        <end position="424"/>
    </location>
</feature>
<feature type="region of interest" description="Disordered" evidence="4">
    <location>
        <begin position="154"/>
        <end position="184"/>
    </location>
</feature>
<feature type="region of interest" description="Disordered" evidence="4">
    <location>
        <begin position="312"/>
        <end position="362"/>
    </location>
</feature>
<feature type="coiled-coil region" evidence="9">
    <location>
        <begin position="23"/>
        <end position="272"/>
    </location>
</feature>
<feature type="compositionally biased region" description="Basic and acidic residues" evidence="4">
    <location>
        <begin position="154"/>
        <end position="176"/>
    </location>
</feature>
<feature type="compositionally biased region" description="Basic and acidic residues" evidence="4">
    <location>
        <begin position="312"/>
        <end position="321"/>
    </location>
</feature>
<feature type="modified residue" description="Phosphoserine" evidence="1">
    <location>
        <position position="276"/>
    </location>
</feature>
<feature type="modified residue" description="Phosphoserine" evidence="13">
    <location>
        <position position="303"/>
    </location>
</feature>
<feature type="modified residue" description="Phosphoserine" evidence="13">
    <location>
        <position position="319"/>
    </location>
</feature>
<feature type="modified residue" description="Phosphothreonine" evidence="1">
    <location>
        <position position="324"/>
    </location>
</feature>
<feature type="modified residue" description="Phosphoserine" evidence="1">
    <location>
        <position position="327"/>
    </location>
</feature>
<feature type="modified residue" description="Phosphoserine" evidence="11 12 13">
    <location>
        <position position="354"/>
    </location>
</feature>
<feature type="modified residue" description="Phosphoserine" evidence="13">
    <location>
        <position position="383"/>
    </location>
</feature>
<feature type="mutagenesis site" description="Loss of DNM1-, SYNJ1- and WASL-binding. Loss of effect on transferrin endocytosis." evidence="5">
    <original>P</original>
    <variation>L</variation>
    <location>
        <position position="415"/>
    </location>
</feature>
<feature type="sequence conflict" description="In Ref. 1; AAG31022." evidence="10" ref="1">
    <original>R</original>
    <variation>G</variation>
    <location>
        <position position="360"/>
    </location>
</feature>
<feature type="turn" evidence="14">
    <location>
        <begin position="19"/>
        <end position="22"/>
    </location>
</feature>
<feature type="helix" evidence="14">
    <location>
        <begin position="23"/>
        <end position="70"/>
    </location>
</feature>
<feature type="helix" evidence="14">
    <location>
        <begin position="75"/>
        <end position="103"/>
    </location>
</feature>
<feature type="helix" evidence="14">
    <location>
        <begin position="105"/>
        <end position="117"/>
    </location>
</feature>
<feature type="strand" evidence="16">
    <location>
        <begin position="122"/>
        <end position="126"/>
    </location>
</feature>
<feature type="helix" evidence="14">
    <location>
        <begin position="127"/>
        <end position="170"/>
    </location>
</feature>
<feature type="strand" evidence="14">
    <location>
        <begin position="186"/>
        <end position="190"/>
    </location>
</feature>
<feature type="turn" evidence="14">
    <location>
        <begin position="191"/>
        <end position="193"/>
    </location>
</feature>
<feature type="helix" evidence="14">
    <location>
        <begin position="194"/>
        <end position="253"/>
    </location>
</feature>
<feature type="helix" evidence="14">
    <location>
        <begin position="255"/>
        <end position="257"/>
    </location>
</feature>
<feature type="helix" evidence="14">
    <location>
        <begin position="259"/>
        <end position="274"/>
    </location>
</feature>
<feature type="helix" evidence="14">
    <location>
        <begin position="277"/>
        <end position="288"/>
    </location>
</feature>
<feature type="strand" evidence="15">
    <location>
        <begin position="289"/>
        <end position="292"/>
    </location>
</feature>
<proteinExistence type="evidence at protein level"/>
<name>PACN3_MOUSE</name>
<dbReference type="EMBL" id="AF149824">
    <property type="protein sequence ID" value="AAG31022.1"/>
    <property type="molecule type" value="mRNA"/>
</dbReference>
<dbReference type="EMBL" id="AF242531">
    <property type="protein sequence ID" value="AAK29208.1"/>
    <property type="molecule type" value="mRNA"/>
</dbReference>
<dbReference type="EMBL" id="BC003884">
    <property type="protein sequence ID" value="AAH03884.1"/>
    <property type="molecule type" value="mRNA"/>
</dbReference>
<dbReference type="CCDS" id="CCDS16429.1"/>
<dbReference type="RefSeq" id="NP_001276606.1">
    <property type="nucleotide sequence ID" value="NM_001289677.1"/>
</dbReference>
<dbReference type="RefSeq" id="NP_001276607.1">
    <property type="nucleotide sequence ID" value="NM_001289678.1"/>
</dbReference>
<dbReference type="RefSeq" id="NP_083009.1">
    <property type="nucleotide sequence ID" value="NM_028733.4"/>
</dbReference>
<dbReference type="RefSeq" id="NP_112019.2">
    <property type="nucleotide sequence ID" value="NM_030880.3"/>
</dbReference>
<dbReference type="RefSeq" id="XP_006500487.1">
    <property type="nucleotide sequence ID" value="XM_006500424.5"/>
</dbReference>
<dbReference type="RefSeq" id="XP_006500488.1">
    <property type="nucleotide sequence ID" value="XM_006500425.1"/>
</dbReference>
<dbReference type="RefSeq" id="XP_006500490.1">
    <property type="nucleotide sequence ID" value="XM_006500427.5"/>
</dbReference>
<dbReference type="RefSeq" id="XP_006500491.1">
    <property type="nucleotide sequence ID" value="XM_006500428.5"/>
</dbReference>
<dbReference type="RefSeq" id="XP_030108116.1">
    <property type="nucleotide sequence ID" value="XM_030252256.2"/>
</dbReference>
<dbReference type="PDB" id="3M3W">
    <property type="method" value="X-ray"/>
    <property type="resolution" value="2.60 A"/>
    <property type="chains" value="A/B=1-320"/>
</dbReference>
<dbReference type="PDB" id="3QE6">
    <property type="method" value="X-ray"/>
    <property type="resolution" value="2.60 A"/>
    <property type="chains" value="A/B=1-304"/>
</dbReference>
<dbReference type="PDB" id="3SYV">
    <property type="method" value="X-ray"/>
    <property type="resolution" value="3.10 A"/>
    <property type="chains" value="A/B/C/D/E/F/G/H=1-341"/>
</dbReference>
<dbReference type="PDBsum" id="3M3W"/>
<dbReference type="PDBsum" id="3QE6"/>
<dbReference type="PDBsum" id="3SYV"/>
<dbReference type="SMR" id="Q99JB8"/>
<dbReference type="BioGRID" id="219797">
    <property type="interactions" value="9"/>
</dbReference>
<dbReference type="CORUM" id="Q99JB8"/>
<dbReference type="FunCoup" id="Q99JB8">
    <property type="interactions" value="959"/>
</dbReference>
<dbReference type="IntAct" id="Q99JB8">
    <property type="interactions" value="4"/>
</dbReference>
<dbReference type="MINT" id="Q99JB8"/>
<dbReference type="STRING" id="10090.ENSMUSP00000106981"/>
<dbReference type="GlyGen" id="Q99JB8">
    <property type="glycosylation" value="1 site, 1 O-linked glycan (1 site)"/>
</dbReference>
<dbReference type="iPTMnet" id="Q99JB8"/>
<dbReference type="PhosphoSitePlus" id="Q99JB8"/>
<dbReference type="SwissPalm" id="Q99JB8"/>
<dbReference type="jPOST" id="Q99JB8"/>
<dbReference type="PaxDb" id="10090-ENSMUSP00000106981"/>
<dbReference type="ProteomicsDB" id="294147"/>
<dbReference type="Pumba" id="Q99JB8"/>
<dbReference type="Antibodypedia" id="26590">
    <property type="antibodies" value="496 antibodies from 32 providers"/>
</dbReference>
<dbReference type="DNASU" id="80708"/>
<dbReference type="Ensembl" id="ENSMUST00000028694.12">
    <property type="protein sequence ID" value="ENSMUSP00000028694.6"/>
    <property type="gene ID" value="ENSMUSG00000027257.14"/>
</dbReference>
<dbReference type="Ensembl" id="ENSMUST00000059566.11">
    <property type="protein sequence ID" value="ENSMUSP00000054391.5"/>
    <property type="gene ID" value="ENSMUSG00000027257.14"/>
</dbReference>
<dbReference type="Ensembl" id="ENSMUST00000111349.9">
    <property type="protein sequence ID" value="ENSMUSP00000106981.3"/>
    <property type="gene ID" value="ENSMUSG00000027257.14"/>
</dbReference>
<dbReference type="Ensembl" id="ENSMUST00000168916.8">
    <property type="protein sequence ID" value="ENSMUSP00000129175.2"/>
    <property type="gene ID" value="ENSMUSG00000027257.14"/>
</dbReference>
<dbReference type="GeneID" id="80708"/>
<dbReference type="KEGG" id="mmu:80708"/>
<dbReference type="UCSC" id="uc008kvm.2">
    <property type="organism name" value="mouse"/>
</dbReference>
<dbReference type="AGR" id="MGI:1891410"/>
<dbReference type="CTD" id="29763"/>
<dbReference type="MGI" id="MGI:1891410">
    <property type="gene designation" value="Pacsin3"/>
</dbReference>
<dbReference type="VEuPathDB" id="HostDB:ENSMUSG00000027257"/>
<dbReference type="eggNOG" id="KOG2856">
    <property type="taxonomic scope" value="Eukaryota"/>
</dbReference>
<dbReference type="GeneTree" id="ENSGT00950000182973"/>
<dbReference type="HOGENOM" id="CLU_030752_2_0_1"/>
<dbReference type="InParanoid" id="Q99JB8"/>
<dbReference type="OMA" id="SGQDEEW"/>
<dbReference type="OrthoDB" id="10255128at2759"/>
<dbReference type="PhylomeDB" id="Q99JB8"/>
<dbReference type="TreeFam" id="TF313677"/>
<dbReference type="Reactome" id="R-MMU-8856828">
    <property type="pathway name" value="Clathrin-mediated endocytosis"/>
</dbReference>
<dbReference type="BioGRID-ORCS" id="80708">
    <property type="hits" value="7 hits in 77 CRISPR screens"/>
</dbReference>
<dbReference type="CD-CODE" id="01CA17F3">
    <property type="entry name" value="Centrosome"/>
</dbReference>
<dbReference type="CD-CODE" id="CE726F99">
    <property type="entry name" value="Postsynaptic density"/>
</dbReference>
<dbReference type="ChiTaRS" id="Pacsin3">
    <property type="organism name" value="mouse"/>
</dbReference>
<dbReference type="EvolutionaryTrace" id="Q99JB8"/>
<dbReference type="PRO" id="PR:Q99JB8"/>
<dbReference type="Proteomes" id="UP000000589">
    <property type="component" value="Chromosome 2"/>
</dbReference>
<dbReference type="RNAct" id="Q99JB8">
    <property type="molecule type" value="protein"/>
</dbReference>
<dbReference type="Bgee" id="ENSMUSG00000027257">
    <property type="expression patterns" value="Expressed in hindlimb stylopod muscle and 204 other cell types or tissues"/>
</dbReference>
<dbReference type="ExpressionAtlas" id="Q99JB8">
    <property type="expression patterns" value="baseline and differential"/>
</dbReference>
<dbReference type="GO" id="GO:0005737">
    <property type="term" value="C:cytoplasm"/>
    <property type="evidence" value="ECO:0000314"/>
    <property type="project" value="MGI"/>
</dbReference>
<dbReference type="GO" id="GO:0005829">
    <property type="term" value="C:cytosol"/>
    <property type="evidence" value="ECO:0007669"/>
    <property type="project" value="Ensembl"/>
</dbReference>
<dbReference type="GO" id="GO:0005886">
    <property type="term" value="C:plasma membrane"/>
    <property type="evidence" value="ECO:0007669"/>
    <property type="project" value="UniProtKB-SubCell"/>
</dbReference>
<dbReference type="GO" id="GO:0019855">
    <property type="term" value="F:calcium channel inhibitor activity"/>
    <property type="evidence" value="ECO:0000315"/>
    <property type="project" value="UniProtKB"/>
</dbReference>
<dbReference type="GO" id="GO:0008092">
    <property type="term" value="F:cytoskeletal protein binding"/>
    <property type="evidence" value="ECO:0000314"/>
    <property type="project" value="MGI"/>
</dbReference>
<dbReference type="GO" id="GO:0042802">
    <property type="term" value="F:identical protein binding"/>
    <property type="evidence" value="ECO:0007669"/>
    <property type="project" value="Ensembl"/>
</dbReference>
<dbReference type="GO" id="GO:0008289">
    <property type="term" value="F:lipid binding"/>
    <property type="evidence" value="ECO:0000314"/>
    <property type="project" value="UniProtKB"/>
</dbReference>
<dbReference type="GO" id="GO:0006897">
    <property type="term" value="P:endocytosis"/>
    <property type="evidence" value="ECO:0007669"/>
    <property type="project" value="UniProtKB-KW"/>
</dbReference>
<dbReference type="GO" id="GO:0051926">
    <property type="term" value="P:negative regulation of calcium ion transport"/>
    <property type="evidence" value="ECO:0000315"/>
    <property type="project" value="UniProtKB"/>
</dbReference>
<dbReference type="GO" id="GO:0045806">
    <property type="term" value="P:negative regulation of endocytosis"/>
    <property type="evidence" value="ECO:0000314"/>
    <property type="project" value="MGI"/>
</dbReference>
<dbReference type="GO" id="GO:0097320">
    <property type="term" value="P:plasma membrane tubulation"/>
    <property type="evidence" value="ECO:0000314"/>
    <property type="project" value="UniProtKB"/>
</dbReference>
<dbReference type="GO" id="GO:0051044">
    <property type="term" value="P:positive regulation of membrane protein ectodomain proteolysis"/>
    <property type="evidence" value="ECO:0007669"/>
    <property type="project" value="Ensembl"/>
</dbReference>
<dbReference type="CDD" id="cd11997">
    <property type="entry name" value="SH3_PACSIN3"/>
    <property type="match status" value="1"/>
</dbReference>
<dbReference type="FunFam" id="2.30.30.40:FF:000014">
    <property type="entry name" value="Kinase C and casein kinase substrate in neurons protein"/>
    <property type="match status" value="1"/>
</dbReference>
<dbReference type="FunFam" id="1.20.1270.60:FF:000009">
    <property type="entry name" value="Protein kinase C and casein kinase substrate in neurons 2"/>
    <property type="match status" value="1"/>
</dbReference>
<dbReference type="Gene3D" id="1.20.1270.60">
    <property type="entry name" value="Arfaptin homology (AH) domain/BAR domain"/>
    <property type="match status" value="1"/>
</dbReference>
<dbReference type="Gene3D" id="2.30.30.40">
    <property type="entry name" value="SH3 Domains"/>
    <property type="match status" value="1"/>
</dbReference>
<dbReference type="InterPro" id="IPR027267">
    <property type="entry name" value="AH/BAR_dom_sf"/>
</dbReference>
<dbReference type="InterPro" id="IPR031160">
    <property type="entry name" value="F_BAR"/>
</dbReference>
<dbReference type="InterPro" id="IPR001060">
    <property type="entry name" value="FCH_dom"/>
</dbReference>
<dbReference type="InterPro" id="IPR036028">
    <property type="entry name" value="SH3-like_dom_sf"/>
</dbReference>
<dbReference type="InterPro" id="IPR001452">
    <property type="entry name" value="SH3_domain"/>
</dbReference>
<dbReference type="PANTHER" id="PTHR23065">
    <property type="entry name" value="PROLINE-SERINE-THREONINE PHOSPHATASE INTERACTING PROTEIN 1"/>
    <property type="match status" value="1"/>
</dbReference>
<dbReference type="PANTHER" id="PTHR23065:SF18">
    <property type="entry name" value="PROTEIN KINASE C AND CASEIN KINASE SUBSTRATE IN NEURONS PROTEIN 3"/>
    <property type="match status" value="1"/>
</dbReference>
<dbReference type="Pfam" id="PF00611">
    <property type="entry name" value="FCH"/>
    <property type="match status" value="1"/>
</dbReference>
<dbReference type="Pfam" id="PF14604">
    <property type="entry name" value="SH3_9"/>
    <property type="match status" value="1"/>
</dbReference>
<dbReference type="PRINTS" id="PR00452">
    <property type="entry name" value="SH3DOMAIN"/>
</dbReference>
<dbReference type="SMART" id="SM00055">
    <property type="entry name" value="FCH"/>
    <property type="match status" value="1"/>
</dbReference>
<dbReference type="SMART" id="SM00326">
    <property type="entry name" value="SH3"/>
    <property type="match status" value="1"/>
</dbReference>
<dbReference type="SUPFAM" id="SSF103657">
    <property type="entry name" value="BAR/IMD domain-like"/>
    <property type="match status" value="1"/>
</dbReference>
<dbReference type="SUPFAM" id="SSF50044">
    <property type="entry name" value="SH3-domain"/>
    <property type="match status" value="1"/>
</dbReference>
<dbReference type="PROSITE" id="PS51741">
    <property type="entry name" value="F_BAR"/>
    <property type="match status" value="1"/>
</dbReference>
<dbReference type="PROSITE" id="PS50002">
    <property type="entry name" value="SH3"/>
    <property type="match status" value="1"/>
</dbReference>
<reference key="1">
    <citation type="journal article" date="2000" name="J. Cell Sci.">
        <title>All three PACSIN isoforms bind to endocytic proteins and inhibit endocytosis.</title>
        <authorList>
            <person name="Modregger J."/>
            <person name="Ritter B."/>
            <person name="Witter B."/>
            <person name="Paulsson M."/>
            <person name="Plomann M."/>
        </authorList>
    </citation>
    <scope>NUCLEOTIDE SEQUENCE [MRNA]</scope>
    <scope>FUNCTION</scope>
    <scope>INTERACTION WITH DNM1; SYNJ1 AND WASL</scope>
    <scope>HOMOOLIGOMERIZATION</scope>
    <scope>HETEROOLIGOMERIZATION WITH PACSIN1 AND PACSIN2</scope>
    <scope>SUBCELLULAR LOCATION</scope>
    <scope>TISSUE SPECIFICITY</scope>
    <scope>MUTAGENESIS OF PRO-415</scope>
    <source>
        <strain>C57BL/6J</strain>
    </source>
</reference>
<reference key="2">
    <citation type="journal article" date="2001" name="Gene">
        <title>PACSIN 3 is a novel SH3 domain cytoplasmic adapter protein of the pacsin-syndapin-FAP52 gene family.</title>
        <authorList>
            <person name="Sumoy L."/>
            <person name="Pluvinet R."/>
            <person name="Andreu N."/>
            <person name="Estivill X."/>
            <person name="Escarceller M."/>
        </authorList>
    </citation>
    <scope>NUCLEOTIDE SEQUENCE [MRNA]</scope>
</reference>
<reference key="3">
    <citation type="journal article" date="2004" name="Genome Res.">
        <title>The status, quality, and expansion of the NIH full-length cDNA project: the Mammalian Gene Collection (MGC).</title>
        <authorList>
            <consortium name="The MGC Project Team"/>
        </authorList>
    </citation>
    <scope>NUCLEOTIDE SEQUENCE [LARGE SCALE MRNA]</scope>
    <source>
        <tissue>Neuron</tissue>
    </source>
</reference>
<reference key="4">
    <citation type="journal article" date="2006" name="J. Biol. Chem.">
        <title>PACSINs bind to the TRPV4 cation channel. PACSIN 3 modulates the subcellular localization of TRPV4.</title>
        <authorList>
            <person name="Cuajungco M.P."/>
            <person name="Grimm C."/>
            <person name="Oshima K."/>
            <person name="D'hoedt D."/>
            <person name="Nilius B."/>
            <person name="Mensenkamp A.R."/>
            <person name="Bindels R.J."/>
            <person name="Plomann M."/>
            <person name="Heller S."/>
        </authorList>
    </citation>
    <scope>FUNCTION</scope>
    <scope>INTERACTION WITH TRPV4</scope>
</reference>
<reference key="5">
    <citation type="journal article" date="2007" name="Biochem. Biophys. Res. Commun.">
        <title>PACSIN3 overexpression increases adipocyte glucose transport through GLUT1.</title>
        <authorList>
            <person name="Roach W."/>
            <person name="Plomann M."/>
        </authorList>
    </citation>
    <scope>FUNCTION</scope>
</reference>
<reference key="6">
    <citation type="journal article" date="2007" name="Proc. Natl. Acad. Sci. U.S.A.">
        <title>Large-scale phosphorylation analysis of mouse liver.</title>
        <authorList>
            <person name="Villen J."/>
            <person name="Beausoleil S.A."/>
            <person name="Gerber S.A."/>
            <person name="Gygi S.P."/>
        </authorList>
    </citation>
    <scope>PHOSPHORYLATION [LARGE SCALE ANALYSIS] AT SER-354</scope>
    <scope>IDENTIFICATION BY MASS SPECTROMETRY [LARGE SCALE ANALYSIS]</scope>
    <source>
        <tissue>Liver</tissue>
    </source>
</reference>
<reference key="7">
    <citation type="journal article" date="2008" name="J. Biol. Chem.">
        <title>Stimulus-specific modulation of the cation channel TRPV4 by PACSIN 3.</title>
        <authorList>
            <person name="D'hoedt D."/>
            <person name="Owsianik G."/>
            <person name="Prenen J."/>
            <person name="Cuajungco M.P."/>
            <person name="Grimm C."/>
            <person name="Heller S."/>
            <person name="Voets T."/>
            <person name="Nilius B."/>
        </authorList>
    </citation>
    <scope>FUNCTION</scope>
    <scope>INTERACTION WITH TRPV4</scope>
</reference>
<reference key="8">
    <citation type="journal article" date="2009" name="Mol. Cell. Proteomics">
        <title>Large scale localization of protein phosphorylation by use of electron capture dissociation mass spectrometry.</title>
        <authorList>
            <person name="Sweet S.M."/>
            <person name="Bailey C.M."/>
            <person name="Cunningham D.L."/>
            <person name="Heath J.K."/>
            <person name="Cooper H.J."/>
        </authorList>
    </citation>
    <scope>PHOSPHORYLATION [LARGE SCALE ANALYSIS] AT SER-354</scope>
    <scope>IDENTIFICATION BY MASS SPECTROMETRY [LARGE SCALE ANALYSIS]</scope>
    <source>
        <tissue>Embryonic fibroblast</tissue>
    </source>
</reference>
<reference key="9">
    <citation type="journal article" date="2010" name="Cell">
        <title>A tissue-specific atlas of mouse protein phosphorylation and expression.</title>
        <authorList>
            <person name="Huttlin E.L."/>
            <person name="Jedrychowski M.P."/>
            <person name="Elias J.E."/>
            <person name="Goswami T."/>
            <person name="Rad R."/>
            <person name="Beausoleil S.A."/>
            <person name="Villen J."/>
            <person name="Haas W."/>
            <person name="Sowa M.E."/>
            <person name="Gygi S.P."/>
        </authorList>
    </citation>
    <scope>PHOSPHORYLATION [LARGE SCALE ANALYSIS] AT SER-303; SER-319; SER-354 AND SER-383</scope>
    <scope>IDENTIFICATION BY MASS SPECTROMETRY [LARGE SCALE ANALYSIS]</scope>
    <source>
        <tissue>Brain</tissue>
        <tissue>Brown adipose tissue</tissue>
        <tissue>Heart</tissue>
        <tissue>Kidney</tissue>
        <tissue>Liver</tissue>
        <tissue>Lung</tissue>
        <tissue>Pancreas</tissue>
        <tissue>Testis</tissue>
    </source>
</reference>
<reference key="10">
    <citation type="journal article" date="2012" name="J. Biol. Chem.">
        <title>Rigidity of wedge loop in PACSIN 3 protein is a key factor in dictating diameters of tubules.</title>
        <authorList>
            <person name="Bai X."/>
            <person name="Meng G."/>
            <person name="Luo M."/>
            <person name="Zheng X."/>
        </authorList>
    </citation>
    <scope>X-RAY CRYSTALLOGRAPHY (2.6 ANGSTROMS) OF 1-320</scope>
    <scope>COILED COIL</scope>
    <scope>SUBUNIT</scope>
    <scope>LIPID-BINDING</scope>
    <scope>DOMAIN</scope>
</reference>
<comment type="function">
    <text evidence="5 6 7 8">Plays a role in endocytosis and regulates internalization of plasma membrane proteins. Overexpression impairs internalization of SLC2A1/GLUT1 and TRPV4 and increases the levels of SLC2A1/GLUT1 and TRPV4 at the cell membrane. Inhibits the TRPV4 calcium channel activity.</text>
</comment>
<comment type="subunit">
    <text evidence="5 6 8 9">Homodimer. May form heterooligomers with other PACSINs. Interacts (via SH3 domain) with DNM1, SYNJ1 and WASL. Interacts with TRPV4.</text>
</comment>
<comment type="subcellular location">
    <subcellularLocation>
        <location evidence="5">Cytoplasm</location>
    </subcellularLocation>
    <subcellularLocation>
        <location evidence="5">Cell membrane</location>
        <topology evidence="5">Peripheral membrane protein</topology>
        <orientation evidence="5">Cytoplasmic side</orientation>
    </subcellularLocation>
    <text>Detected at the inner aspect of the plasma membrane in myotubes.</text>
</comment>
<comment type="tissue specificity">
    <text evidence="5">Highly expressed in skeletal muscle, heart and lung; also detected in brain, kidney and uterus (at protein level).</text>
</comment>
<comment type="domain">
    <text evidence="9">The F-BAR domain forms a coiled coil and mediates membrane-binding and membrane tubulation.</text>
</comment>
<comment type="PTM">
    <text>Phosphorylated by casein kinase 2 (CK2) and protein kinase C (PKC).</text>
</comment>
<comment type="similarity">
    <text evidence="10">Belongs to the PACSIN family.</text>
</comment>
<evidence type="ECO:0000250" key="1">
    <source>
        <dbReference type="UniProtKB" id="Q9UKS6"/>
    </source>
</evidence>
<evidence type="ECO:0000255" key="2">
    <source>
        <dbReference type="PROSITE-ProRule" id="PRU00192"/>
    </source>
</evidence>
<evidence type="ECO:0000255" key="3">
    <source>
        <dbReference type="PROSITE-ProRule" id="PRU01077"/>
    </source>
</evidence>
<evidence type="ECO:0000256" key="4">
    <source>
        <dbReference type="SAM" id="MobiDB-lite"/>
    </source>
</evidence>
<evidence type="ECO:0000269" key="5">
    <source>
    </source>
</evidence>
<evidence type="ECO:0000269" key="6">
    <source>
    </source>
</evidence>
<evidence type="ECO:0000269" key="7">
    <source>
    </source>
</evidence>
<evidence type="ECO:0000269" key="8">
    <source>
    </source>
</evidence>
<evidence type="ECO:0000269" key="9">
    <source>
    </source>
</evidence>
<evidence type="ECO:0000305" key="10"/>
<evidence type="ECO:0007744" key="11">
    <source>
    </source>
</evidence>
<evidence type="ECO:0007744" key="12">
    <source>
    </source>
</evidence>
<evidence type="ECO:0007744" key="13">
    <source>
    </source>
</evidence>
<evidence type="ECO:0007829" key="14">
    <source>
        <dbReference type="PDB" id="3M3W"/>
    </source>
</evidence>
<evidence type="ECO:0007829" key="15">
    <source>
        <dbReference type="PDB" id="3QE6"/>
    </source>
</evidence>
<evidence type="ECO:0007829" key="16">
    <source>
        <dbReference type="PDB" id="3SYV"/>
    </source>
</evidence>
<protein>
    <recommendedName>
        <fullName>Protein kinase C and casein kinase II substrate protein 3</fullName>
    </recommendedName>
</protein>
<keyword id="KW-0002">3D-structure</keyword>
<keyword id="KW-1003">Cell membrane</keyword>
<keyword id="KW-0175">Coiled coil</keyword>
<keyword id="KW-0963">Cytoplasm</keyword>
<keyword id="KW-0254">Endocytosis</keyword>
<keyword id="KW-0446">Lipid-binding</keyword>
<keyword id="KW-0472">Membrane</keyword>
<keyword id="KW-0597">Phosphoprotein</keyword>
<keyword id="KW-1185">Reference proteome</keyword>
<keyword id="KW-0728">SH3 domain</keyword>
<gene>
    <name type="primary">Pacsin3</name>
</gene>